<protein>
    <recommendedName>
        <fullName evidence="1">Aspartate--tRNA ligase</fullName>
        <ecNumber evidence="1">6.1.1.12</ecNumber>
    </recommendedName>
    <alternativeName>
        <fullName evidence="1">Aspartyl-tRNA synthetase</fullName>
        <shortName evidence="1">AspRS</shortName>
    </alternativeName>
</protein>
<comment type="function">
    <text evidence="1">Catalyzes the attachment of L-aspartate to tRNA(Asp) in a two-step reaction: L-aspartate is first activated by ATP to form Asp-AMP and then transferred to the acceptor end of tRNA(Asp).</text>
</comment>
<comment type="catalytic activity">
    <reaction evidence="1">
        <text>tRNA(Asp) + L-aspartate + ATP = L-aspartyl-tRNA(Asp) + AMP + diphosphate</text>
        <dbReference type="Rhea" id="RHEA:19649"/>
        <dbReference type="Rhea" id="RHEA-COMP:9660"/>
        <dbReference type="Rhea" id="RHEA-COMP:9678"/>
        <dbReference type="ChEBI" id="CHEBI:29991"/>
        <dbReference type="ChEBI" id="CHEBI:30616"/>
        <dbReference type="ChEBI" id="CHEBI:33019"/>
        <dbReference type="ChEBI" id="CHEBI:78442"/>
        <dbReference type="ChEBI" id="CHEBI:78516"/>
        <dbReference type="ChEBI" id="CHEBI:456215"/>
        <dbReference type="EC" id="6.1.1.12"/>
    </reaction>
</comment>
<comment type="subunit">
    <text evidence="1">Homodimer.</text>
</comment>
<comment type="subcellular location">
    <subcellularLocation>
        <location evidence="1">Cytoplasm</location>
    </subcellularLocation>
</comment>
<comment type="similarity">
    <text evidence="1">Belongs to the class-II aminoacyl-tRNA synthetase family. Type 1 subfamily.</text>
</comment>
<feature type="chain" id="PRO_1000006690" description="Aspartate--tRNA ligase">
    <location>
        <begin position="1"/>
        <end position="601"/>
    </location>
</feature>
<feature type="region of interest" description="Aspartate" evidence="1">
    <location>
        <begin position="200"/>
        <end position="203"/>
    </location>
</feature>
<feature type="binding site" evidence="1">
    <location>
        <position position="176"/>
    </location>
    <ligand>
        <name>L-aspartate</name>
        <dbReference type="ChEBI" id="CHEBI:29991"/>
    </ligand>
</feature>
<feature type="binding site" evidence="1">
    <location>
        <begin position="222"/>
        <end position="224"/>
    </location>
    <ligand>
        <name>ATP</name>
        <dbReference type="ChEBI" id="CHEBI:30616"/>
    </ligand>
</feature>
<feature type="binding site" evidence="1">
    <location>
        <position position="222"/>
    </location>
    <ligand>
        <name>L-aspartate</name>
        <dbReference type="ChEBI" id="CHEBI:29991"/>
    </ligand>
</feature>
<feature type="binding site" evidence="1">
    <location>
        <position position="231"/>
    </location>
    <ligand>
        <name>ATP</name>
        <dbReference type="ChEBI" id="CHEBI:30616"/>
    </ligand>
</feature>
<feature type="binding site" evidence="1">
    <location>
        <position position="448"/>
    </location>
    <ligand>
        <name>L-aspartate</name>
        <dbReference type="ChEBI" id="CHEBI:29991"/>
    </ligand>
</feature>
<feature type="binding site" evidence="1">
    <location>
        <position position="482"/>
    </location>
    <ligand>
        <name>ATP</name>
        <dbReference type="ChEBI" id="CHEBI:30616"/>
    </ligand>
</feature>
<feature type="binding site" evidence="1">
    <location>
        <position position="489"/>
    </location>
    <ligand>
        <name>L-aspartate</name>
        <dbReference type="ChEBI" id="CHEBI:29991"/>
    </ligand>
</feature>
<feature type="binding site" evidence="1">
    <location>
        <begin position="534"/>
        <end position="537"/>
    </location>
    <ligand>
        <name>ATP</name>
        <dbReference type="ChEBI" id="CHEBI:30616"/>
    </ligand>
</feature>
<keyword id="KW-0030">Aminoacyl-tRNA synthetase</keyword>
<keyword id="KW-0067">ATP-binding</keyword>
<keyword id="KW-0963">Cytoplasm</keyword>
<keyword id="KW-0436">Ligase</keyword>
<keyword id="KW-0547">Nucleotide-binding</keyword>
<keyword id="KW-0648">Protein biosynthesis</keyword>
<keyword id="KW-1185">Reference proteome</keyword>
<gene>
    <name evidence="1" type="primary">aspS</name>
    <name type="ordered locus">LSEI_1526</name>
</gene>
<accession>Q038S1</accession>
<dbReference type="EC" id="6.1.1.12" evidence="1"/>
<dbReference type="EMBL" id="CP000423">
    <property type="protein sequence ID" value="ABJ70301.1"/>
    <property type="molecule type" value="Genomic_DNA"/>
</dbReference>
<dbReference type="RefSeq" id="WP_003565683.1">
    <property type="nucleotide sequence ID" value="NC_008526.1"/>
</dbReference>
<dbReference type="RefSeq" id="YP_806743.1">
    <property type="nucleotide sequence ID" value="NC_008526.1"/>
</dbReference>
<dbReference type="SMR" id="Q038S1"/>
<dbReference type="STRING" id="321967.LSEI_1526"/>
<dbReference type="PaxDb" id="321967-LSEI_1526"/>
<dbReference type="GeneID" id="57090183"/>
<dbReference type="KEGG" id="lca:LSEI_1526"/>
<dbReference type="PATRIC" id="fig|321967.11.peg.1508"/>
<dbReference type="HOGENOM" id="CLU_014330_3_2_9"/>
<dbReference type="Proteomes" id="UP000001651">
    <property type="component" value="Chromosome"/>
</dbReference>
<dbReference type="GO" id="GO:0005737">
    <property type="term" value="C:cytoplasm"/>
    <property type="evidence" value="ECO:0007669"/>
    <property type="project" value="UniProtKB-SubCell"/>
</dbReference>
<dbReference type="GO" id="GO:0004815">
    <property type="term" value="F:aspartate-tRNA ligase activity"/>
    <property type="evidence" value="ECO:0007669"/>
    <property type="project" value="UniProtKB-UniRule"/>
</dbReference>
<dbReference type="GO" id="GO:0005524">
    <property type="term" value="F:ATP binding"/>
    <property type="evidence" value="ECO:0007669"/>
    <property type="project" value="UniProtKB-UniRule"/>
</dbReference>
<dbReference type="GO" id="GO:0140096">
    <property type="term" value="F:catalytic activity, acting on a protein"/>
    <property type="evidence" value="ECO:0007669"/>
    <property type="project" value="UniProtKB-ARBA"/>
</dbReference>
<dbReference type="GO" id="GO:0003676">
    <property type="term" value="F:nucleic acid binding"/>
    <property type="evidence" value="ECO:0007669"/>
    <property type="project" value="InterPro"/>
</dbReference>
<dbReference type="GO" id="GO:0016740">
    <property type="term" value="F:transferase activity"/>
    <property type="evidence" value="ECO:0007669"/>
    <property type="project" value="UniProtKB-ARBA"/>
</dbReference>
<dbReference type="GO" id="GO:0006422">
    <property type="term" value="P:aspartyl-tRNA aminoacylation"/>
    <property type="evidence" value="ECO:0007669"/>
    <property type="project" value="UniProtKB-UniRule"/>
</dbReference>
<dbReference type="CDD" id="cd00777">
    <property type="entry name" value="AspRS_core"/>
    <property type="match status" value="1"/>
</dbReference>
<dbReference type="CDD" id="cd04317">
    <property type="entry name" value="EcAspRS_like_N"/>
    <property type="match status" value="1"/>
</dbReference>
<dbReference type="Gene3D" id="3.30.930.10">
    <property type="entry name" value="Bira Bifunctional Protein, Domain 2"/>
    <property type="match status" value="1"/>
</dbReference>
<dbReference type="Gene3D" id="3.30.1360.30">
    <property type="entry name" value="GAD-like domain"/>
    <property type="match status" value="1"/>
</dbReference>
<dbReference type="Gene3D" id="2.40.50.140">
    <property type="entry name" value="Nucleic acid-binding proteins"/>
    <property type="match status" value="1"/>
</dbReference>
<dbReference type="HAMAP" id="MF_00044">
    <property type="entry name" value="Asp_tRNA_synth_type1"/>
    <property type="match status" value="1"/>
</dbReference>
<dbReference type="InterPro" id="IPR004364">
    <property type="entry name" value="Aa-tRNA-synt_II"/>
</dbReference>
<dbReference type="InterPro" id="IPR006195">
    <property type="entry name" value="aa-tRNA-synth_II"/>
</dbReference>
<dbReference type="InterPro" id="IPR045864">
    <property type="entry name" value="aa-tRNA-synth_II/BPL/LPL"/>
</dbReference>
<dbReference type="InterPro" id="IPR004524">
    <property type="entry name" value="Asp-tRNA-ligase_1"/>
</dbReference>
<dbReference type="InterPro" id="IPR047089">
    <property type="entry name" value="Asp-tRNA-ligase_1_N"/>
</dbReference>
<dbReference type="InterPro" id="IPR002312">
    <property type="entry name" value="Asp/Asn-tRNA-synth_IIb"/>
</dbReference>
<dbReference type="InterPro" id="IPR047090">
    <property type="entry name" value="AspRS_core"/>
</dbReference>
<dbReference type="InterPro" id="IPR004115">
    <property type="entry name" value="GAD-like_sf"/>
</dbReference>
<dbReference type="InterPro" id="IPR029351">
    <property type="entry name" value="GAD_dom"/>
</dbReference>
<dbReference type="InterPro" id="IPR012340">
    <property type="entry name" value="NA-bd_OB-fold"/>
</dbReference>
<dbReference type="InterPro" id="IPR004365">
    <property type="entry name" value="NA-bd_OB_tRNA"/>
</dbReference>
<dbReference type="NCBIfam" id="TIGR00459">
    <property type="entry name" value="aspS_bact"/>
    <property type="match status" value="1"/>
</dbReference>
<dbReference type="NCBIfam" id="NF001750">
    <property type="entry name" value="PRK00476.1"/>
    <property type="match status" value="1"/>
</dbReference>
<dbReference type="PANTHER" id="PTHR22594:SF5">
    <property type="entry name" value="ASPARTATE--TRNA LIGASE, MITOCHONDRIAL"/>
    <property type="match status" value="1"/>
</dbReference>
<dbReference type="PANTHER" id="PTHR22594">
    <property type="entry name" value="ASPARTYL/LYSYL-TRNA SYNTHETASE"/>
    <property type="match status" value="1"/>
</dbReference>
<dbReference type="Pfam" id="PF02938">
    <property type="entry name" value="GAD"/>
    <property type="match status" value="1"/>
</dbReference>
<dbReference type="Pfam" id="PF00152">
    <property type="entry name" value="tRNA-synt_2"/>
    <property type="match status" value="1"/>
</dbReference>
<dbReference type="Pfam" id="PF01336">
    <property type="entry name" value="tRNA_anti-codon"/>
    <property type="match status" value="1"/>
</dbReference>
<dbReference type="PRINTS" id="PR01042">
    <property type="entry name" value="TRNASYNTHASP"/>
</dbReference>
<dbReference type="SUPFAM" id="SSF55681">
    <property type="entry name" value="Class II aaRS and biotin synthetases"/>
    <property type="match status" value="1"/>
</dbReference>
<dbReference type="SUPFAM" id="SSF55261">
    <property type="entry name" value="GAD domain-like"/>
    <property type="match status" value="1"/>
</dbReference>
<dbReference type="SUPFAM" id="SSF50249">
    <property type="entry name" value="Nucleic acid-binding proteins"/>
    <property type="match status" value="1"/>
</dbReference>
<dbReference type="PROSITE" id="PS50862">
    <property type="entry name" value="AA_TRNA_LIGASE_II"/>
    <property type="match status" value="1"/>
</dbReference>
<name>SYD_LACP3</name>
<organism>
    <name type="scientific">Lacticaseibacillus paracasei (strain ATCC 334 / BCRC 17002 / CCUG 31169 / CIP 107868 / KCTC 3260 / NRRL B-441)</name>
    <name type="common">Lactobacillus paracasei</name>
    <dbReference type="NCBI Taxonomy" id="321967"/>
    <lineage>
        <taxon>Bacteria</taxon>
        <taxon>Bacillati</taxon>
        <taxon>Bacillota</taxon>
        <taxon>Bacilli</taxon>
        <taxon>Lactobacillales</taxon>
        <taxon>Lactobacillaceae</taxon>
        <taxon>Lacticaseibacillus</taxon>
    </lineage>
</organism>
<reference key="1">
    <citation type="journal article" date="2006" name="Proc. Natl. Acad. Sci. U.S.A.">
        <title>Comparative genomics of the lactic acid bacteria.</title>
        <authorList>
            <person name="Makarova K.S."/>
            <person name="Slesarev A."/>
            <person name="Wolf Y.I."/>
            <person name="Sorokin A."/>
            <person name="Mirkin B."/>
            <person name="Koonin E.V."/>
            <person name="Pavlov A."/>
            <person name="Pavlova N."/>
            <person name="Karamychev V."/>
            <person name="Polouchine N."/>
            <person name="Shakhova V."/>
            <person name="Grigoriev I."/>
            <person name="Lou Y."/>
            <person name="Rohksar D."/>
            <person name="Lucas S."/>
            <person name="Huang K."/>
            <person name="Goodstein D.M."/>
            <person name="Hawkins T."/>
            <person name="Plengvidhya V."/>
            <person name="Welker D."/>
            <person name="Hughes J."/>
            <person name="Goh Y."/>
            <person name="Benson A."/>
            <person name="Baldwin K."/>
            <person name="Lee J.-H."/>
            <person name="Diaz-Muniz I."/>
            <person name="Dosti B."/>
            <person name="Smeianov V."/>
            <person name="Wechter W."/>
            <person name="Barabote R."/>
            <person name="Lorca G."/>
            <person name="Altermann E."/>
            <person name="Barrangou R."/>
            <person name="Ganesan B."/>
            <person name="Xie Y."/>
            <person name="Rawsthorne H."/>
            <person name="Tamir D."/>
            <person name="Parker C."/>
            <person name="Breidt F."/>
            <person name="Broadbent J.R."/>
            <person name="Hutkins R."/>
            <person name="O'Sullivan D."/>
            <person name="Steele J."/>
            <person name="Unlu G."/>
            <person name="Saier M.H. Jr."/>
            <person name="Klaenhammer T."/>
            <person name="Richardson P."/>
            <person name="Kozyavkin S."/>
            <person name="Weimer B.C."/>
            <person name="Mills D.A."/>
        </authorList>
    </citation>
    <scope>NUCLEOTIDE SEQUENCE [LARGE SCALE GENOMIC DNA]</scope>
    <source>
        <strain>ATCC 334 / BCRC 17002 / CCUG 31169 / CIP 107868 / KCTC 3260 / NRRL B-441</strain>
    </source>
</reference>
<sequence length="601" mass="67596">MSKRTCYAGDVTAEYVDQEVTLKGWVQKRRSLGSLIFIDLRDREGIVQLVFSEEFDKDALAVANSVRSEYVIEVQGVVKKRKPQAVNKDMKTGDVEVEVHTITILNKAKTPPFYIEDGVAVTEETKLKYRYLDLRRPEMQKNIFTRAHIMRSVHHFLDDNGFIDVETPTLTASTPEGARDYLVPSRVYPGSFYALPQSPQLFKQLLMGAGFDRYYQIARCFRDEDLRGDRQPEFTQIDLETSFLTAEEIQDITEGLIAKVMHDVKGIDVKLPFDRITWQDAMDKYGSDKPDLRFDMQIQDVSELVKDSDFKVFAGAVQNGGQVRAIVLPGGADKYSRKMIDAQQDYIKRFGAKGLAWLKVTSDGISGPIAKFFGDGADLVKAVGANAGDLVLFVADKAKVVADALGYLRTHFGHDLGLIDEQAFRFCWVVDWPLFEYDEGIQRWVPAHHPFTMPNEEDVHLLDTDPHAAHAQSYDIVLNGYELGGGSIRIHNREIQEKMLKALGFTPERAQKSFGFLLNALDYGFPPHGGLAIGLDRFVMLLTGRDNIRDVIAFPKNSKASEPMTSAPYPVADAQLKDLGIEVRADVDPEKEHEGDENLTE</sequence>
<proteinExistence type="inferred from homology"/>
<evidence type="ECO:0000255" key="1">
    <source>
        <dbReference type="HAMAP-Rule" id="MF_00044"/>
    </source>
</evidence>